<evidence type="ECO:0000255" key="1">
    <source>
        <dbReference type="HAMAP-Rule" id="MF_00294"/>
    </source>
</evidence>
<evidence type="ECO:0000305" key="2"/>
<gene>
    <name evidence="1" type="primary">rpmG</name>
    <name type="ordered locus">Sez_1895</name>
</gene>
<feature type="chain" id="PRO_0000356708" description="Large ribosomal subunit protein bL33">
    <location>
        <begin position="1"/>
        <end position="49"/>
    </location>
</feature>
<reference key="1">
    <citation type="journal article" date="2008" name="PLoS ONE">
        <title>Genome sequence of a lancefield group C Streptococcus zooepidemicus strain causing epidemic nephritis: new information about an old disease.</title>
        <authorList>
            <person name="Beres S.B."/>
            <person name="Sesso R."/>
            <person name="Pinto S.W.L."/>
            <person name="Hoe N.P."/>
            <person name="Porcella S.F."/>
            <person name="Deleo F.R."/>
            <person name="Musser J.M."/>
        </authorList>
    </citation>
    <scope>NUCLEOTIDE SEQUENCE [LARGE SCALE GENOMIC DNA]</scope>
    <source>
        <strain>MGCS10565</strain>
    </source>
</reference>
<name>RL33_STREM</name>
<comment type="similarity">
    <text evidence="1">Belongs to the bacterial ribosomal protein bL33 family.</text>
</comment>
<protein>
    <recommendedName>
        <fullName evidence="1">Large ribosomal subunit protein bL33</fullName>
    </recommendedName>
    <alternativeName>
        <fullName evidence="2">50S ribosomal protein L33</fullName>
    </alternativeName>
</protein>
<proteinExistence type="inferred from homology"/>
<dbReference type="EMBL" id="CP001129">
    <property type="protein sequence ID" value="ACG63217.1"/>
    <property type="molecule type" value="Genomic_DNA"/>
</dbReference>
<dbReference type="RefSeq" id="WP_001265622.1">
    <property type="nucleotide sequence ID" value="NC_011134.1"/>
</dbReference>
<dbReference type="SMR" id="B4U0K8"/>
<dbReference type="GeneID" id="98394265"/>
<dbReference type="KEGG" id="sez:Sez_1895"/>
<dbReference type="HOGENOM" id="CLU_190949_3_2_9"/>
<dbReference type="Proteomes" id="UP000001873">
    <property type="component" value="Chromosome"/>
</dbReference>
<dbReference type="GO" id="GO:0005737">
    <property type="term" value="C:cytoplasm"/>
    <property type="evidence" value="ECO:0007669"/>
    <property type="project" value="UniProtKB-ARBA"/>
</dbReference>
<dbReference type="GO" id="GO:1990904">
    <property type="term" value="C:ribonucleoprotein complex"/>
    <property type="evidence" value="ECO:0007669"/>
    <property type="project" value="UniProtKB-KW"/>
</dbReference>
<dbReference type="GO" id="GO:0005840">
    <property type="term" value="C:ribosome"/>
    <property type="evidence" value="ECO:0007669"/>
    <property type="project" value="UniProtKB-KW"/>
</dbReference>
<dbReference type="GO" id="GO:0003735">
    <property type="term" value="F:structural constituent of ribosome"/>
    <property type="evidence" value="ECO:0007669"/>
    <property type="project" value="InterPro"/>
</dbReference>
<dbReference type="GO" id="GO:0006412">
    <property type="term" value="P:translation"/>
    <property type="evidence" value="ECO:0007669"/>
    <property type="project" value="UniProtKB-UniRule"/>
</dbReference>
<dbReference type="Gene3D" id="2.20.28.120">
    <property type="entry name" value="Ribosomal protein L33"/>
    <property type="match status" value="1"/>
</dbReference>
<dbReference type="HAMAP" id="MF_00294">
    <property type="entry name" value="Ribosomal_bL33"/>
    <property type="match status" value="1"/>
</dbReference>
<dbReference type="InterPro" id="IPR001705">
    <property type="entry name" value="Ribosomal_bL33"/>
</dbReference>
<dbReference type="InterPro" id="IPR018264">
    <property type="entry name" value="Ribosomal_bL33_CS"/>
</dbReference>
<dbReference type="InterPro" id="IPR038584">
    <property type="entry name" value="Ribosomal_bL33_sf"/>
</dbReference>
<dbReference type="InterPro" id="IPR011332">
    <property type="entry name" value="Ribosomal_zn-bd"/>
</dbReference>
<dbReference type="NCBIfam" id="NF001764">
    <property type="entry name" value="PRK00504.1"/>
    <property type="match status" value="1"/>
</dbReference>
<dbReference type="NCBIfam" id="NF001860">
    <property type="entry name" value="PRK00595.1"/>
    <property type="match status" value="1"/>
</dbReference>
<dbReference type="NCBIfam" id="TIGR01023">
    <property type="entry name" value="rpmG_bact"/>
    <property type="match status" value="1"/>
</dbReference>
<dbReference type="PANTHER" id="PTHR43168">
    <property type="entry name" value="50S RIBOSOMAL PROTEIN L33, CHLOROPLASTIC"/>
    <property type="match status" value="1"/>
</dbReference>
<dbReference type="PANTHER" id="PTHR43168:SF2">
    <property type="entry name" value="LARGE RIBOSOMAL SUBUNIT PROTEIN BL33C"/>
    <property type="match status" value="1"/>
</dbReference>
<dbReference type="Pfam" id="PF00471">
    <property type="entry name" value="Ribosomal_L33"/>
    <property type="match status" value="1"/>
</dbReference>
<dbReference type="SUPFAM" id="SSF57829">
    <property type="entry name" value="Zn-binding ribosomal proteins"/>
    <property type="match status" value="1"/>
</dbReference>
<dbReference type="PROSITE" id="PS00582">
    <property type="entry name" value="RIBOSOMAL_L33"/>
    <property type="match status" value="1"/>
</dbReference>
<accession>B4U0K8</accession>
<keyword id="KW-0687">Ribonucleoprotein</keyword>
<keyword id="KW-0689">Ribosomal protein</keyword>
<organism>
    <name type="scientific">Streptococcus equi subsp. zooepidemicus (strain MGCS10565)</name>
    <dbReference type="NCBI Taxonomy" id="552526"/>
    <lineage>
        <taxon>Bacteria</taxon>
        <taxon>Bacillati</taxon>
        <taxon>Bacillota</taxon>
        <taxon>Bacilli</taxon>
        <taxon>Lactobacillales</taxon>
        <taxon>Streptococcaceae</taxon>
        <taxon>Streptococcus</taxon>
    </lineage>
</organism>
<sequence length="49" mass="5911">MRVNITLEHKESGERLYLTSKNKRNTPDRLQLKKYSPKLRKHVVFTEVK</sequence>